<organism>
    <name type="scientific">Mycobacterium tuberculosis (strain ATCC 25618 / H37Rv)</name>
    <dbReference type="NCBI Taxonomy" id="83332"/>
    <lineage>
        <taxon>Bacteria</taxon>
        <taxon>Bacillati</taxon>
        <taxon>Actinomycetota</taxon>
        <taxon>Actinomycetes</taxon>
        <taxon>Mycobacteriales</taxon>
        <taxon>Mycobacteriaceae</taxon>
        <taxon>Mycobacterium</taxon>
        <taxon>Mycobacterium tuberculosis complex</taxon>
    </lineage>
</organism>
<sequence>MKFVVASYGTRGDIEPCAAVGLELQRRGHDVCLAVPPNLIGFVETAGLSAVAYGSRDSQEQLDEQFLHNAWKLQNPIKLLREAMAPVTEGWAELSAMLTPVAAGADLLLTGQIYQEVVANVAEHHGIPLAALHFYPVRANGEIAFPARLPAPLVRSTITAIDWLYWRMTKGVEDAQRRELGLPKASTPAPRRMAVRGSLEIQAYDALCFPGLAAEWGGRRPFVGALTMESATDADDEVASWIAADTPPIYFGFGSMPIGSLADRVAMISAACAELGERALICSGPSDATGIPQFDHVKVVRVVSHAAVFPTCRAVVHHGGAGTTAAGLRAGIPTLILWVTSDQPIWAAQIKQLKVGRGRRFSSATKESLIADLRTILAPDYVTRAREIASRMTKPAASVTATADLLEDAARRAR</sequence>
<keyword id="KW-0328">Glycosyltransferase</keyword>
<keyword id="KW-1185">Reference proteome</keyword>
<keyword id="KW-0808">Transferase</keyword>
<comment type="similarity">
    <text evidence="1">Belongs to the glycosyltransferase 28 family.</text>
</comment>
<proteinExistence type="evidence at protein level"/>
<dbReference type="EC" id="2.4.-.-"/>
<dbReference type="EMBL" id="AL123456">
    <property type="protein sequence ID" value="CCP44288.1"/>
    <property type="molecule type" value="Genomic_DNA"/>
</dbReference>
<dbReference type="PIR" id="D70723">
    <property type="entry name" value="D70723"/>
</dbReference>
<dbReference type="RefSeq" id="NP_216040.1">
    <property type="nucleotide sequence ID" value="NC_000962.3"/>
</dbReference>
<dbReference type="RefSeq" id="WP_003407671.1">
    <property type="nucleotide sequence ID" value="NZ_NVQJ01000004.1"/>
</dbReference>
<dbReference type="SMR" id="P9WN07"/>
<dbReference type="FunCoup" id="P9WN07">
    <property type="interactions" value="89"/>
</dbReference>
<dbReference type="STRING" id="83332.Rv1524"/>
<dbReference type="PaxDb" id="83332-Rv1524"/>
<dbReference type="GeneID" id="885814"/>
<dbReference type="KEGG" id="mtu:Rv1524"/>
<dbReference type="KEGG" id="mtv:RVBD_1524"/>
<dbReference type="TubercuList" id="Rv1524"/>
<dbReference type="eggNOG" id="COG1819">
    <property type="taxonomic scope" value="Bacteria"/>
</dbReference>
<dbReference type="InParanoid" id="P9WN07"/>
<dbReference type="OrthoDB" id="3253247at2"/>
<dbReference type="Proteomes" id="UP000001584">
    <property type="component" value="Chromosome"/>
</dbReference>
<dbReference type="GO" id="GO:0016758">
    <property type="term" value="F:hexosyltransferase activity"/>
    <property type="evidence" value="ECO:0007669"/>
    <property type="project" value="InterPro"/>
</dbReference>
<dbReference type="GO" id="GO:0008194">
    <property type="term" value="F:UDP-glycosyltransferase activity"/>
    <property type="evidence" value="ECO:0007669"/>
    <property type="project" value="InterPro"/>
</dbReference>
<dbReference type="GO" id="GO:0005975">
    <property type="term" value="P:carbohydrate metabolic process"/>
    <property type="evidence" value="ECO:0007669"/>
    <property type="project" value="InterPro"/>
</dbReference>
<dbReference type="GO" id="GO:0030259">
    <property type="term" value="P:lipid glycosylation"/>
    <property type="evidence" value="ECO:0007669"/>
    <property type="project" value="InterPro"/>
</dbReference>
<dbReference type="GO" id="GO:0033072">
    <property type="term" value="P:vancomycin biosynthetic process"/>
    <property type="evidence" value="ECO:0007669"/>
    <property type="project" value="UniProtKB-ARBA"/>
</dbReference>
<dbReference type="CDD" id="cd03784">
    <property type="entry name" value="GT1_Gtf-like"/>
    <property type="match status" value="1"/>
</dbReference>
<dbReference type="FunFam" id="3.40.50.2000:FF:000170">
    <property type="entry name" value="Probable glycosyltransferase"/>
    <property type="match status" value="1"/>
</dbReference>
<dbReference type="FunFam" id="3.40.50.2000:FF:000009">
    <property type="entry name" value="Sterol 3-beta-glucosyltransferase UGT80A2"/>
    <property type="match status" value="1"/>
</dbReference>
<dbReference type="Gene3D" id="3.40.50.2000">
    <property type="entry name" value="Glycogen Phosphorylase B"/>
    <property type="match status" value="2"/>
</dbReference>
<dbReference type="InterPro" id="IPR010610">
    <property type="entry name" value="EryCIII-like_C"/>
</dbReference>
<dbReference type="InterPro" id="IPR050426">
    <property type="entry name" value="Glycosyltransferase_28"/>
</dbReference>
<dbReference type="InterPro" id="IPR004276">
    <property type="entry name" value="GlycoTrans_28_N"/>
</dbReference>
<dbReference type="InterPro" id="IPR002213">
    <property type="entry name" value="UDP_glucos_trans"/>
</dbReference>
<dbReference type="PANTHER" id="PTHR48050">
    <property type="entry name" value="STEROL 3-BETA-GLUCOSYLTRANSFERASE"/>
    <property type="match status" value="1"/>
</dbReference>
<dbReference type="PANTHER" id="PTHR48050:SF13">
    <property type="entry name" value="STEROL 3-BETA-GLUCOSYLTRANSFERASE UGT80A2"/>
    <property type="match status" value="1"/>
</dbReference>
<dbReference type="Pfam" id="PF06722">
    <property type="entry name" value="EryCIII-like_C"/>
    <property type="match status" value="1"/>
</dbReference>
<dbReference type="Pfam" id="PF03033">
    <property type="entry name" value="Glyco_transf_28"/>
    <property type="match status" value="1"/>
</dbReference>
<dbReference type="SUPFAM" id="SSF53756">
    <property type="entry name" value="UDP-Glycosyltransferase/glycogen phosphorylase"/>
    <property type="match status" value="1"/>
</dbReference>
<name>Y1524_MYCTU</name>
<evidence type="ECO:0000305" key="1"/>
<feature type="chain" id="PRO_0000215623" description="Uncharacterized glycosyltransferase Rv1524">
    <location>
        <begin position="1"/>
        <end position="414"/>
    </location>
</feature>
<accession>P9WN07</accession>
<accession>L0T9W0</accession>
<accession>P64865</accession>
<accession>Q50583</accession>
<gene>
    <name type="ordered locus">Rv1524</name>
    <name type="ORF">MTCY19G5.04c</name>
</gene>
<protein>
    <recommendedName>
        <fullName>Uncharacterized glycosyltransferase Rv1524</fullName>
        <ecNumber>2.4.-.-</ecNumber>
    </recommendedName>
</protein>
<reference key="1">
    <citation type="journal article" date="1998" name="Nature">
        <title>Deciphering the biology of Mycobacterium tuberculosis from the complete genome sequence.</title>
        <authorList>
            <person name="Cole S.T."/>
            <person name="Brosch R."/>
            <person name="Parkhill J."/>
            <person name="Garnier T."/>
            <person name="Churcher C.M."/>
            <person name="Harris D.E."/>
            <person name="Gordon S.V."/>
            <person name="Eiglmeier K."/>
            <person name="Gas S."/>
            <person name="Barry C.E. III"/>
            <person name="Tekaia F."/>
            <person name="Badcock K."/>
            <person name="Basham D."/>
            <person name="Brown D."/>
            <person name="Chillingworth T."/>
            <person name="Connor R."/>
            <person name="Davies R.M."/>
            <person name="Devlin K."/>
            <person name="Feltwell T."/>
            <person name="Gentles S."/>
            <person name="Hamlin N."/>
            <person name="Holroyd S."/>
            <person name="Hornsby T."/>
            <person name="Jagels K."/>
            <person name="Krogh A."/>
            <person name="McLean J."/>
            <person name="Moule S."/>
            <person name="Murphy L.D."/>
            <person name="Oliver S."/>
            <person name="Osborne J."/>
            <person name="Quail M.A."/>
            <person name="Rajandream M.A."/>
            <person name="Rogers J."/>
            <person name="Rutter S."/>
            <person name="Seeger K."/>
            <person name="Skelton S."/>
            <person name="Squares S."/>
            <person name="Squares R."/>
            <person name="Sulston J.E."/>
            <person name="Taylor K."/>
            <person name="Whitehead S."/>
            <person name="Barrell B.G."/>
        </authorList>
    </citation>
    <scope>NUCLEOTIDE SEQUENCE [LARGE SCALE GENOMIC DNA]</scope>
    <source>
        <strain>ATCC 25618 / H37Rv</strain>
    </source>
</reference>
<reference key="2">
    <citation type="journal article" date="2011" name="Mol. Cell. Proteomics">
        <title>Proteogenomic analysis of Mycobacterium tuberculosis by high resolution mass spectrometry.</title>
        <authorList>
            <person name="Kelkar D.S."/>
            <person name="Kumar D."/>
            <person name="Kumar P."/>
            <person name="Balakrishnan L."/>
            <person name="Muthusamy B."/>
            <person name="Yadav A.K."/>
            <person name="Shrivastava P."/>
            <person name="Marimuthu A."/>
            <person name="Anand S."/>
            <person name="Sundaram H."/>
            <person name="Kingsbury R."/>
            <person name="Harsha H.C."/>
            <person name="Nair B."/>
            <person name="Prasad T.S."/>
            <person name="Chauhan D.S."/>
            <person name="Katoch K."/>
            <person name="Katoch V.M."/>
            <person name="Kumar P."/>
            <person name="Chaerkady R."/>
            <person name="Ramachandran S."/>
            <person name="Dash D."/>
            <person name="Pandey A."/>
        </authorList>
    </citation>
    <scope>IDENTIFICATION BY MASS SPECTROMETRY [LARGE SCALE ANALYSIS]</scope>
    <source>
        <strain>ATCC 25618 / H37Rv</strain>
    </source>
</reference>